<evidence type="ECO:0000255" key="1">
    <source>
        <dbReference type="HAMAP-Rule" id="MF_00185"/>
    </source>
</evidence>
<sequence>MKKEKIIVIVGPTGVGKTALSLQVAQQLKGEIISGDAMQVYRHLDIGTAKVTPAEQAIAPHHLIDVADIDERFTAFNFQQQGQQLITKITDRQHLPLIVGGTGLYLQALLYDMTLGSATDAEQDFSIRNKWQAYLEQHSETDLWQALAKIDPDAAAKIPAANTRRVIRALEVYETTGVLFSQQKPKELRYDTFIIGLNCERPVLYERINQRVDQMVDAGLIEEARWAYERRATSPQAVRGIGYKEFFPYFDGECSLEAAIDQVKQNSRHYAKRQLTWFRNQIPVNWYNLVEHQEADLARIQEDIQTWLQK</sequence>
<dbReference type="EC" id="2.5.1.75" evidence="1"/>
<dbReference type="EMBL" id="CR936503">
    <property type="protein sequence ID" value="CAI55630.1"/>
    <property type="molecule type" value="Genomic_DNA"/>
</dbReference>
<dbReference type="RefSeq" id="WP_011375021.1">
    <property type="nucleotide sequence ID" value="NC_007576.1"/>
</dbReference>
<dbReference type="SMR" id="Q38W03"/>
<dbReference type="STRING" id="314315.LCA_1326"/>
<dbReference type="KEGG" id="lsa:LCA_1326"/>
<dbReference type="eggNOG" id="COG0324">
    <property type="taxonomic scope" value="Bacteria"/>
</dbReference>
<dbReference type="HOGENOM" id="CLU_032616_0_1_9"/>
<dbReference type="OrthoDB" id="9776390at2"/>
<dbReference type="Proteomes" id="UP000002707">
    <property type="component" value="Chromosome"/>
</dbReference>
<dbReference type="GO" id="GO:0005524">
    <property type="term" value="F:ATP binding"/>
    <property type="evidence" value="ECO:0007669"/>
    <property type="project" value="UniProtKB-UniRule"/>
</dbReference>
<dbReference type="GO" id="GO:0052381">
    <property type="term" value="F:tRNA dimethylallyltransferase activity"/>
    <property type="evidence" value="ECO:0007669"/>
    <property type="project" value="UniProtKB-UniRule"/>
</dbReference>
<dbReference type="GO" id="GO:0006400">
    <property type="term" value="P:tRNA modification"/>
    <property type="evidence" value="ECO:0007669"/>
    <property type="project" value="TreeGrafter"/>
</dbReference>
<dbReference type="Gene3D" id="1.10.20.140">
    <property type="match status" value="1"/>
</dbReference>
<dbReference type="Gene3D" id="3.40.50.300">
    <property type="entry name" value="P-loop containing nucleotide triphosphate hydrolases"/>
    <property type="match status" value="1"/>
</dbReference>
<dbReference type="HAMAP" id="MF_00185">
    <property type="entry name" value="IPP_trans"/>
    <property type="match status" value="1"/>
</dbReference>
<dbReference type="InterPro" id="IPR039657">
    <property type="entry name" value="Dimethylallyltransferase"/>
</dbReference>
<dbReference type="InterPro" id="IPR018022">
    <property type="entry name" value="IPT"/>
</dbReference>
<dbReference type="InterPro" id="IPR027417">
    <property type="entry name" value="P-loop_NTPase"/>
</dbReference>
<dbReference type="NCBIfam" id="TIGR00174">
    <property type="entry name" value="miaA"/>
    <property type="match status" value="1"/>
</dbReference>
<dbReference type="PANTHER" id="PTHR11088">
    <property type="entry name" value="TRNA DIMETHYLALLYLTRANSFERASE"/>
    <property type="match status" value="1"/>
</dbReference>
<dbReference type="PANTHER" id="PTHR11088:SF60">
    <property type="entry name" value="TRNA DIMETHYLALLYLTRANSFERASE"/>
    <property type="match status" value="1"/>
</dbReference>
<dbReference type="Pfam" id="PF01715">
    <property type="entry name" value="IPPT"/>
    <property type="match status" value="1"/>
</dbReference>
<dbReference type="SUPFAM" id="SSF52540">
    <property type="entry name" value="P-loop containing nucleoside triphosphate hydrolases"/>
    <property type="match status" value="2"/>
</dbReference>
<accession>Q38W03</accession>
<proteinExistence type="inferred from homology"/>
<name>MIAA_LATSS</name>
<reference key="1">
    <citation type="journal article" date="2005" name="Nat. Biotechnol.">
        <title>The complete genome sequence of the meat-borne lactic acid bacterium Lactobacillus sakei 23K.</title>
        <authorList>
            <person name="Chaillou S."/>
            <person name="Champomier-Verges M.-C."/>
            <person name="Cornet M."/>
            <person name="Crutz-Le Coq A.-M."/>
            <person name="Dudez A.-M."/>
            <person name="Martin V."/>
            <person name="Beaufils S."/>
            <person name="Darbon-Rongere E."/>
            <person name="Bossy R."/>
            <person name="Loux V."/>
            <person name="Zagorec M."/>
        </authorList>
    </citation>
    <scope>NUCLEOTIDE SEQUENCE [LARGE SCALE GENOMIC DNA]</scope>
    <source>
        <strain>23K</strain>
    </source>
</reference>
<comment type="function">
    <text evidence="1">Catalyzes the transfer of a dimethylallyl group onto the adenine at position 37 in tRNAs that read codons beginning with uridine, leading to the formation of N6-(dimethylallyl)adenosine (i(6)A).</text>
</comment>
<comment type="catalytic activity">
    <reaction evidence="1">
        <text>adenosine(37) in tRNA + dimethylallyl diphosphate = N(6)-dimethylallyladenosine(37) in tRNA + diphosphate</text>
        <dbReference type="Rhea" id="RHEA:26482"/>
        <dbReference type="Rhea" id="RHEA-COMP:10162"/>
        <dbReference type="Rhea" id="RHEA-COMP:10375"/>
        <dbReference type="ChEBI" id="CHEBI:33019"/>
        <dbReference type="ChEBI" id="CHEBI:57623"/>
        <dbReference type="ChEBI" id="CHEBI:74411"/>
        <dbReference type="ChEBI" id="CHEBI:74415"/>
        <dbReference type="EC" id="2.5.1.75"/>
    </reaction>
</comment>
<comment type="cofactor">
    <cofactor evidence="1">
        <name>Mg(2+)</name>
        <dbReference type="ChEBI" id="CHEBI:18420"/>
    </cofactor>
</comment>
<comment type="subunit">
    <text evidence="1">Monomer.</text>
</comment>
<comment type="similarity">
    <text evidence="1">Belongs to the IPP transferase family.</text>
</comment>
<protein>
    <recommendedName>
        <fullName evidence="1">tRNA dimethylallyltransferase</fullName>
        <ecNumber evidence="1">2.5.1.75</ecNumber>
    </recommendedName>
    <alternativeName>
        <fullName evidence="1">Dimethylallyl diphosphate:tRNA dimethylallyltransferase</fullName>
        <shortName evidence="1">DMAPP:tRNA dimethylallyltransferase</shortName>
        <shortName evidence="1">DMATase</shortName>
    </alternativeName>
    <alternativeName>
        <fullName evidence="1">Isopentenyl-diphosphate:tRNA isopentenyltransferase</fullName>
        <shortName evidence="1">IPP transferase</shortName>
        <shortName evidence="1">IPPT</shortName>
        <shortName evidence="1">IPTase</shortName>
    </alternativeName>
</protein>
<feature type="chain" id="PRO_0000377199" description="tRNA dimethylallyltransferase">
    <location>
        <begin position="1"/>
        <end position="310"/>
    </location>
</feature>
<feature type="binding site" evidence="1">
    <location>
        <begin position="11"/>
        <end position="18"/>
    </location>
    <ligand>
        <name>ATP</name>
        <dbReference type="ChEBI" id="CHEBI:30616"/>
    </ligand>
</feature>
<feature type="binding site" evidence="1">
    <location>
        <begin position="13"/>
        <end position="18"/>
    </location>
    <ligand>
        <name>substrate</name>
    </ligand>
</feature>
<feature type="site" description="Interaction with substrate tRNA" evidence="1">
    <location>
        <position position="102"/>
    </location>
</feature>
<feature type="site" description="Interaction with substrate tRNA" evidence="1">
    <location>
        <position position="128"/>
    </location>
</feature>
<keyword id="KW-0067">ATP-binding</keyword>
<keyword id="KW-0460">Magnesium</keyword>
<keyword id="KW-0547">Nucleotide-binding</keyword>
<keyword id="KW-1185">Reference proteome</keyword>
<keyword id="KW-0808">Transferase</keyword>
<keyword id="KW-0819">tRNA processing</keyword>
<organism>
    <name type="scientific">Latilactobacillus sakei subsp. sakei (strain 23K)</name>
    <name type="common">Lactobacillus sakei subsp. sakei</name>
    <dbReference type="NCBI Taxonomy" id="314315"/>
    <lineage>
        <taxon>Bacteria</taxon>
        <taxon>Bacillati</taxon>
        <taxon>Bacillota</taxon>
        <taxon>Bacilli</taxon>
        <taxon>Lactobacillales</taxon>
        <taxon>Lactobacillaceae</taxon>
        <taxon>Latilactobacillus</taxon>
    </lineage>
</organism>
<gene>
    <name evidence="1" type="primary">miaA</name>
    <name type="ordered locus">LCA_1326</name>
</gene>